<feature type="chain" id="PRO_0000076782" description="3-isopropylmalate dehydratase large subunit">
    <location>
        <begin position="1"/>
        <end position="469"/>
    </location>
</feature>
<feature type="binding site" evidence="1">
    <location>
        <position position="347"/>
    </location>
    <ligand>
        <name>[4Fe-4S] cluster</name>
        <dbReference type="ChEBI" id="CHEBI:49883"/>
    </ligand>
</feature>
<feature type="binding site" evidence="1">
    <location>
        <position position="407"/>
    </location>
    <ligand>
        <name>[4Fe-4S] cluster</name>
        <dbReference type="ChEBI" id="CHEBI:49883"/>
    </ligand>
</feature>
<feature type="binding site" evidence="1">
    <location>
        <position position="410"/>
    </location>
    <ligand>
        <name>[4Fe-4S] cluster</name>
        <dbReference type="ChEBI" id="CHEBI:49883"/>
    </ligand>
</feature>
<reference key="1">
    <citation type="journal article" date="2003" name="Nature">
        <title>Genome divergence in two Prochlorococcus ecotypes reflects oceanic niche differentiation.</title>
        <authorList>
            <person name="Rocap G."/>
            <person name="Larimer F.W."/>
            <person name="Lamerdin J.E."/>
            <person name="Malfatti S."/>
            <person name="Chain P."/>
            <person name="Ahlgren N.A."/>
            <person name="Arellano A."/>
            <person name="Coleman M."/>
            <person name="Hauser L."/>
            <person name="Hess W.R."/>
            <person name="Johnson Z.I."/>
            <person name="Land M.L."/>
            <person name="Lindell D."/>
            <person name="Post A.F."/>
            <person name="Regala W."/>
            <person name="Shah M."/>
            <person name="Shaw S.L."/>
            <person name="Steglich C."/>
            <person name="Sullivan M.B."/>
            <person name="Ting C.S."/>
            <person name="Tolonen A."/>
            <person name="Webb E.A."/>
            <person name="Zinser E.R."/>
            <person name="Chisholm S.W."/>
        </authorList>
    </citation>
    <scope>NUCLEOTIDE SEQUENCE [LARGE SCALE GENOMIC DNA]</scope>
    <source>
        <strain>CCMP1986 / NIES-2087 / MED4</strain>
    </source>
</reference>
<proteinExistence type="inferred from homology"/>
<organism>
    <name type="scientific">Prochlorococcus marinus subsp. pastoris (strain CCMP1986 / NIES-2087 / MED4)</name>
    <dbReference type="NCBI Taxonomy" id="59919"/>
    <lineage>
        <taxon>Bacteria</taxon>
        <taxon>Bacillati</taxon>
        <taxon>Cyanobacteriota</taxon>
        <taxon>Cyanophyceae</taxon>
        <taxon>Synechococcales</taxon>
        <taxon>Prochlorococcaceae</taxon>
        <taxon>Prochlorococcus</taxon>
    </lineage>
</organism>
<comment type="function">
    <text evidence="1">Catalyzes the isomerization between 2-isopropylmalate and 3-isopropylmalate, via the formation of 2-isopropylmaleate.</text>
</comment>
<comment type="catalytic activity">
    <reaction evidence="1">
        <text>(2R,3S)-3-isopropylmalate = (2S)-2-isopropylmalate</text>
        <dbReference type="Rhea" id="RHEA:32287"/>
        <dbReference type="ChEBI" id="CHEBI:1178"/>
        <dbReference type="ChEBI" id="CHEBI:35121"/>
        <dbReference type="EC" id="4.2.1.33"/>
    </reaction>
</comment>
<comment type="cofactor">
    <cofactor evidence="1">
        <name>[4Fe-4S] cluster</name>
        <dbReference type="ChEBI" id="CHEBI:49883"/>
    </cofactor>
    <text evidence="1">Binds 1 [4Fe-4S] cluster per subunit.</text>
</comment>
<comment type="pathway">
    <text evidence="1">Amino-acid biosynthesis; L-leucine biosynthesis; L-leucine from 3-methyl-2-oxobutanoate: step 2/4.</text>
</comment>
<comment type="subunit">
    <text evidence="1">Heterodimer of LeuC and LeuD.</text>
</comment>
<comment type="similarity">
    <text evidence="1">Belongs to the aconitase/IPM isomerase family. LeuC type 1 subfamily.</text>
</comment>
<accession>Q7V336</accession>
<keyword id="KW-0004">4Fe-4S</keyword>
<keyword id="KW-0028">Amino-acid biosynthesis</keyword>
<keyword id="KW-0100">Branched-chain amino acid biosynthesis</keyword>
<keyword id="KW-0408">Iron</keyword>
<keyword id="KW-0411">Iron-sulfur</keyword>
<keyword id="KW-0432">Leucine biosynthesis</keyword>
<keyword id="KW-0456">Lyase</keyword>
<keyword id="KW-0479">Metal-binding</keyword>
<name>LEUC_PROMP</name>
<protein>
    <recommendedName>
        <fullName evidence="1">3-isopropylmalate dehydratase large subunit</fullName>
        <ecNumber evidence="1">4.2.1.33</ecNumber>
    </recommendedName>
    <alternativeName>
        <fullName evidence="1">Alpha-IPM isomerase</fullName>
        <shortName evidence="1">IPMI</shortName>
    </alternativeName>
    <alternativeName>
        <fullName evidence="1">Isopropylmalate isomerase</fullName>
    </alternativeName>
</protein>
<evidence type="ECO:0000255" key="1">
    <source>
        <dbReference type="HAMAP-Rule" id="MF_01026"/>
    </source>
</evidence>
<gene>
    <name evidence="1" type="primary">leuC</name>
    <name type="ordered locus">PMM0256</name>
</gene>
<sequence>MSQDTLFDKVWDLHKVANLPGGSDQILIGLHLIHEVTSPQAFGALKDKNLKVKFPQRTVATVDHIVPTDNQSRPFKDNLAEQMIDTLEKNCIEHKIKFFNIGSGNQGIVHVVAPELGLTQPGMTIACGDSHTSTHGAFGSIAFGIGTSQVRDVLASQTIAMNKLKVRQIWCENKLSNGIYAKDLVLHIINQLGVKAGVGYAYEFAGPAISELSMEERMTICNMSIEGGARCGYINPDEKTFSYMKDKLCSPQNENWEKAVKWWKSLESSDNCVYDDVFKLDASKVEPTITWGITPGQSIGVNQKIPSLNQIHPNDQFIAEEAYEYMSFKPGQSIKNTPIDVCFIGSCTNGRISDLRVAAQVLEHNKVAKNIKAFVVPGSEKVAKEAKEEGLDKIFIKAGFQWREPGCSMCLAMNSDKLIGNQVSASSSNRNFKGRQGSPNGRTLLMSPAMVAAASITGKVSDVRDFINK</sequence>
<dbReference type="EC" id="4.2.1.33" evidence="1"/>
<dbReference type="EMBL" id="BX548174">
    <property type="protein sequence ID" value="CAE18715.1"/>
    <property type="molecule type" value="Genomic_DNA"/>
</dbReference>
<dbReference type="RefSeq" id="WP_011131893.1">
    <property type="nucleotide sequence ID" value="NC_005072.1"/>
</dbReference>
<dbReference type="SMR" id="Q7V336"/>
<dbReference type="STRING" id="59919.PMM0256"/>
<dbReference type="KEGG" id="pmm:PMM0256"/>
<dbReference type="eggNOG" id="COG0065">
    <property type="taxonomic scope" value="Bacteria"/>
</dbReference>
<dbReference type="HOGENOM" id="CLU_006714_3_4_3"/>
<dbReference type="OrthoDB" id="9802769at2"/>
<dbReference type="UniPathway" id="UPA00048">
    <property type="reaction ID" value="UER00071"/>
</dbReference>
<dbReference type="Proteomes" id="UP000001026">
    <property type="component" value="Chromosome"/>
</dbReference>
<dbReference type="GO" id="GO:0003861">
    <property type="term" value="F:3-isopropylmalate dehydratase activity"/>
    <property type="evidence" value="ECO:0007669"/>
    <property type="project" value="UniProtKB-UniRule"/>
</dbReference>
<dbReference type="GO" id="GO:0051539">
    <property type="term" value="F:4 iron, 4 sulfur cluster binding"/>
    <property type="evidence" value="ECO:0007669"/>
    <property type="project" value="UniProtKB-KW"/>
</dbReference>
<dbReference type="GO" id="GO:0046872">
    <property type="term" value="F:metal ion binding"/>
    <property type="evidence" value="ECO:0007669"/>
    <property type="project" value="UniProtKB-KW"/>
</dbReference>
<dbReference type="GO" id="GO:0009098">
    <property type="term" value="P:L-leucine biosynthetic process"/>
    <property type="evidence" value="ECO:0007669"/>
    <property type="project" value="UniProtKB-UniRule"/>
</dbReference>
<dbReference type="CDD" id="cd01583">
    <property type="entry name" value="IPMI"/>
    <property type="match status" value="1"/>
</dbReference>
<dbReference type="Gene3D" id="3.30.499.10">
    <property type="entry name" value="Aconitase, domain 3"/>
    <property type="match status" value="2"/>
</dbReference>
<dbReference type="HAMAP" id="MF_01026">
    <property type="entry name" value="LeuC_type1"/>
    <property type="match status" value="1"/>
</dbReference>
<dbReference type="InterPro" id="IPR004430">
    <property type="entry name" value="3-IsopropMal_deHydase_lsu"/>
</dbReference>
<dbReference type="InterPro" id="IPR015931">
    <property type="entry name" value="Acnase/IPM_dHydase_lsu_aba_1/3"/>
</dbReference>
<dbReference type="InterPro" id="IPR001030">
    <property type="entry name" value="Acoase/IPM_deHydtase_lsu_aba"/>
</dbReference>
<dbReference type="InterPro" id="IPR018136">
    <property type="entry name" value="Aconitase_4Fe-4S_BS"/>
</dbReference>
<dbReference type="InterPro" id="IPR036008">
    <property type="entry name" value="Aconitase_4Fe-4S_dom"/>
</dbReference>
<dbReference type="InterPro" id="IPR050067">
    <property type="entry name" value="IPM_dehydratase_rel_enz"/>
</dbReference>
<dbReference type="InterPro" id="IPR033941">
    <property type="entry name" value="IPMI_cat"/>
</dbReference>
<dbReference type="NCBIfam" id="TIGR00170">
    <property type="entry name" value="leuC"/>
    <property type="match status" value="1"/>
</dbReference>
<dbReference type="NCBIfam" id="NF004016">
    <property type="entry name" value="PRK05478.1"/>
    <property type="match status" value="1"/>
</dbReference>
<dbReference type="NCBIfam" id="NF009116">
    <property type="entry name" value="PRK12466.1"/>
    <property type="match status" value="1"/>
</dbReference>
<dbReference type="PANTHER" id="PTHR43822:SF9">
    <property type="entry name" value="3-ISOPROPYLMALATE DEHYDRATASE"/>
    <property type="match status" value="1"/>
</dbReference>
<dbReference type="PANTHER" id="PTHR43822">
    <property type="entry name" value="HOMOACONITASE, MITOCHONDRIAL-RELATED"/>
    <property type="match status" value="1"/>
</dbReference>
<dbReference type="Pfam" id="PF00330">
    <property type="entry name" value="Aconitase"/>
    <property type="match status" value="1"/>
</dbReference>
<dbReference type="PRINTS" id="PR00415">
    <property type="entry name" value="ACONITASE"/>
</dbReference>
<dbReference type="SUPFAM" id="SSF53732">
    <property type="entry name" value="Aconitase iron-sulfur domain"/>
    <property type="match status" value="1"/>
</dbReference>
<dbReference type="PROSITE" id="PS00450">
    <property type="entry name" value="ACONITASE_1"/>
    <property type="match status" value="1"/>
</dbReference>
<dbReference type="PROSITE" id="PS01244">
    <property type="entry name" value="ACONITASE_2"/>
    <property type="match status" value="1"/>
</dbReference>